<gene>
    <name evidence="1" type="primary">rimP</name>
    <name type="ordered locus">Francci3_3565</name>
</gene>
<comment type="function">
    <text evidence="1">Required for maturation of 30S ribosomal subunits.</text>
</comment>
<comment type="subcellular location">
    <subcellularLocation>
        <location evidence="1">Cytoplasm</location>
    </subcellularLocation>
</comment>
<comment type="similarity">
    <text evidence="1">Belongs to the RimP family.</text>
</comment>
<protein>
    <recommendedName>
        <fullName evidence="1">Ribosome maturation factor RimP</fullName>
    </recommendedName>
</protein>
<organism>
    <name type="scientific">Frankia casuarinae (strain DSM 45818 / CECT 9043 / HFP020203 / CcI3)</name>
    <dbReference type="NCBI Taxonomy" id="106370"/>
    <lineage>
        <taxon>Bacteria</taxon>
        <taxon>Bacillati</taxon>
        <taxon>Actinomycetota</taxon>
        <taxon>Actinomycetes</taxon>
        <taxon>Frankiales</taxon>
        <taxon>Frankiaceae</taxon>
        <taxon>Frankia</taxon>
    </lineage>
</organism>
<name>RIMP_FRACC</name>
<sequence>MGSADDQASRMREGTVEVVGAGEAGRARDRSPSGSARGRGGVRTALRARLAAGLADAGFDLEDVTVTRAGSRSVVRVVVDRDGGVDLDAVADASRLASELLDAAETDGQGLVAGPYVLEVTSPGVERPLTEPRHWRRAIGRLVTVRDRDGIVLAGRVLSADESGADLAVATDPARPGRPPRRRLARVTFAQVARATVEVEFSAEAYDDLSIESVETPSLSAVLVEPGETADLGYGEPDDDLPAAPGRESNDDGREAGPRGAAGKEMTR</sequence>
<proteinExistence type="inferred from homology"/>
<evidence type="ECO:0000255" key="1">
    <source>
        <dbReference type="HAMAP-Rule" id="MF_01077"/>
    </source>
</evidence>
<evidence type="ECO:0000256" key="2">
    <source>
        <dbReference type="SAM" id="MobiDB-lite"/>
    </source>
</evidence>
<accession>Q2J725</accession>
<keyword id="KW-0963">Cytoplasm</keyword>
<keyword id="KW-1185">Reference proteome</keyword>
<keyword id="KW-0690">Ribosome biogenesis</keyword>
<reference key="1">
    <citation type="journal article" date="2007" name="Genome Res.">
        <title>Genome characteristics of facultatively symbiotic Frankia sp. strains reflect host range and host plant biogeography.</title>
        <authorList>
            <person name="Normand P."/>
            <person name="Lapierre P."/>
            <person name="Tisa L.S."/>
            <person name="Gogarten J.P."/>
            <person name="Alloisio N."/>
            <person name="Bagnarol E."/>
            <person name="Bassi C.A."/>
            <person name="Berry A.M."/>
            <person name="Bickhart D.M."/>
            <person name="Choisne N."/>
            <person name="Couloux A."/>
            <person name="Cournoyer B."/>
            <person name="Cruveiller S."/>
            <person name="Daubin V."/>
            <person name="Demange N."/>
            <person name="Francino M.P."/>
            <person name="Goltsman E."/>
            <person name="Huang Y."/>
            <person name="Kopp O.R."/>
            <person name="Labarre L."/>
            <person name="Lapidus A."/>
            <person name="Lavire C."/>
            <person name="Marechal J."/>
            <person name="Martinez M."/>
            <person name="Mastronunzio J.E."/>
            <person name="Mullin B.C."/>
            <person name="Niemann J."/>
            <person name="Pujic P."/>
            <person name="Rawnsley T."/>
            <person name="Rouy Z."/>
            <person name="Schenowitz C."/>
            <person name="Sellstedt A."/>
            <person name="Tavares F."/>
            <person name="Tomkins J.P."/>
            <person name="Vallenet D."/>
            <person name="Valverde C."/>
            <person name="Wall L.G."/>
            <person name="Wang Y."/>
            <person name="Medigue C."/>
            <person name="Benson D.R."/>
        </authorList>
    </citation>
    <scope>NUCLEOTIDE SEQUENCE [LARGE SCALE GENOMIC DNA]</scope>
    <source>
        <strain>DSM 45818 / CECT 9043 / HFP020203 / CcI3</strain>
    </source>
</reference>
<feature type="chain" id="PRO_0000384671" description="Ribosome maturation factor RimP">
    <location>
        <begin position="1"/>
        <end position="268"/>
    </location>
</feature>
<feature type="region of interest" description="Disordered" evidence="2">
    <location>
        <begin position="1"/>
        <end position="41"/>
    </location>
</feature>
<feature type="region of interest" description="Disordered" evidence="2">
    <location>
        <begin position="223"/>
        <end position="268"/>
    </location>
</feature>
<feature type="compositionally biased region" description="Low complexity" evidence="2">
    <location>
        <begin position="32"/>
        <end position="41"/>
    </location>
</feature>
<feature type="compositionally biased region" description="Basic and acidic residues" evidence="2">
    <location>
        <begin position="248"/>
        <end position="257"/>
    </location>
</feature>
<dbReference type="EMBL" id="CP000249">
    <property type="protein sequence ID" value="ABD12917.1"/>
    <property type="molecule type" value="Genomic_DNA"/>
</dbReference>
<dbReference type="SMR" id="Q2J725"/>
<dbReference type="STRING" id="106370.Francci3_3565"/>
<dbReference type="KEGG" id="fra:Francci3_3565"/>
<dbReference type="eggNOG" id="COG0779">
    <property type="taxonomic scope" value="Bacteria"/>
</dbReference>
<dbReference type="HOGENOM" id="CLU_086612_0_0_11"/>
<dbReference type="OrthoDB" id="9805006at2"/>
<dbReference type="Proteomes" id="UP000001937">
    <property type="component" value="Chromosome"/>
</dbReference>
<dbReference type="GO" id="GO:0005829">
    <property type="term" value="C:cytosol"/>
    <property type="evidence" value="ECO:0007669"/>
    <property type="project" value="TreeGrafter"/>
</dbReference>
<dbReference type="GO" id="GO:0000028">
    <property type="term" value="P:ribosomal small subunit assembly"/>
    <property type="evidence" value="ECO:0007669"/>
    <property type="project" value="TreeGrafter"/>
</dbReference>
<dbReference type="GO" id="GO:0006412">
    <property type="term" value="P:translation"/>
    <property type="evidence" value="ECO:0007669"/>
    <property type="project" value="TreeGrafter"/>
</dbReference>
<dbReference type="CDD" id="cd01734">
    <property type="entry name" value="YlxS_C"/>
    <property type="match status" value="1"/>
</dbReference>
<dbReference type="Gene3D" id="3.30.300.70">
    <property type="entry name" value="RimP-like superfamily, N-terminal"/>
    <property type="match status" value="1"/>
</dbReference>
<dbReference type="HAMAP" id="MF_01077">
    <property type="entry name" value="RimP"/>
    <property type="match status" value="1"/>
</dbReference>
<dbReference type="InterPro" id="IPR003728">
    <property type="entry name" value="Ribosome_maturation_RimP"/>
</dbReference>
<dbReference type="InterPro" id="IPR028998">
    <property type="entry name" value="RimP_C"/>
</dbReference>
<dbReference type="InterPro" id="IPR028989">
    <property type="entry name" value="RimP_N"/>
</dbReference>
<dbReference type="InterPro" id="IPR035956">
    <property type="entry name" value="RimP_N_sf"/>
</dbReference>
<dbReference type="NCBIfam" id="NF000930">
    <property type="entry name" value="PRK00092.2-2"/>
    <property type="match status" value="1"/>
</dbReference>
<dbReference type="PANTHER" id="PTHR33867">
    <property type="entry name" value="RIBOSOME MATURATION FACTOR RIMP"/>
    <property type="match status" value="1"/>
</dbReference>
<dbReference type="PANTHER" id="PTHR33867:SF1">
    <property type="entry name" value="RIBOSOME MATURATION FACTOR RIMP"/>
    <property type="match status" value="1"/>
</dbReference>
<dbReference type="Pfam" id="PF02576">
    <property type="entry name" value="RimP_N"/>
    <property type="match status" value="1"/>
</dbReference>
<dbReference type="SUPFAM" id="SSF75420">
    <property type="entry name" value="YhbC-like, N-terminal domain"/>
    <property type="match status" value="1"/>
</dbReference>